<gene>
    <name evidence="7" type="primary">ROP35</name>
    <name evidence="8" type="synonym">WNG1</name>
    <name evidence="11" type="ORF">TGRH88_033260</name>
</gene>
<name>WNG1_TOXGO</name>
<comment type="function">
    <text evidence="3 6">Serine/threonine-protein kinase which, at the tachyzoite stage, phosphorylates several parasitophorous vacuole (PV)-resident proteins such as GRA2, GRA6 and GRA7 (PubMed:30850550). By phosphorylating GRA2 and GRA6, regulates the formation of a functional intravacuolar network (IVN); IVN is composed of membranous tubules that bud from the PV membrane into the vacuolar lumen (PubMed:30850550). Plays a role in the establishement of chronic infection in the host by controlling cyst formation in the host tissues (PubMed:27165797).</text>
</comment>
<comment type="catalytic activity">
    <reaction evidence="6">
        <text>L-seryl-[protein] + ATP = O-phospho-L-seryl-[protein] + ADP + H(+)</text>
        <dbReference type="Rhea" id="RHEA:17989"/>
        <dbReference type="Rhea" id="RHEA-COMP:9863"/>
        <dbReference type="Rhea" id="RHEA-COMP:11604"/>
        <dbReference type="ChEBI" id="CHEBI:15378"/>
        <dbReference type="ChEBI" id="CHEBI:29999"/>
        <dbReference type="ChEBI" id="CHEBI:30616"/>
        <dbReference type="ChEBI" id="CHEBI:83421"/>
        <dbReference type="ChEBI" id="CHEBI:456216"/>
        <dbReference type="EC" id="2.7.11.1"/>
    </reaction>
</comment>
<comment type="catalytic activity">
    <reaction evidence="6">
        <text>L-threonyl-[protein] + ATP = O-phospho-L-threonyl-[protein] + ADP + H(+)</text>
        <dbReference type="Rhea" id="RHEA:46608"/>
        <dbReference type="Rhea" id="RHEA-COMP:11060"/>
        <dbReference type="Rhea" id="RHEA-COMP:11605"/>
        <dbReference type="ChEBI" id="CHEBI:15378"/>
        <dbReference type="ChEBI" id="CHEBI:30013"/>
        <dbReference type="ChEBI" id="CHEBI:30616"/>
        <dbReference type="ChEBI" id="CHEBI:61977"/>
        <dbReference type="ChEBI" id="CHEBI:456216"/>
        <dbReference type="EC" id="2.7.11.1"/>
    </reaction>
</comment>
<comment type="cofactor">
    <cofactor evidence="6">
        <name>Mg(2+)</name>
        <dbReference type="ChEBI" id="CHEBI:18420"/>
    </cofactor>
</comment>
<comment type="biophysicochemical properties">
    <kinetics>
        <KM evidence="6">520 uM for ATP (at pH 7.5 and 30 degrees Celsius)</KM>
    </kinetics>
</comment>
<comment type="subcellular location">
    <subcellularLocation>
        <location evidence="6">Cytoplasmic granule</location>
    </subcellularLocation>
    <subcellularLocation>
        <location evidence="6">Secreted</location>
    </subcellularLocation>
    <subcellularLocation>
        <location evidence="6">Parasitophorous vacuole lumen</location>
    </subcellularLocation>
    <text evidence="6">In tachyzoites, localizes to dense granules.</text>
</comment>
<comment type="developmental stage">
    <text evidence="6">Expressed in tachyzoites (at protein level).</text>
</comment>
<comment type="domain">
    <text evidence="6">The protein kinase domain has an atypical kinase fold which lacks the glycine-rich loop that is critical for ATP binding in canonical protein kinase domains.</text>
</comment>
<comment type="disruption phenotype">
    <text evidence="3 4 6">In C57BL/6 mice infected with knockout tachyzoites (type II strain Prugniaud), the number of cysts formed in the brain is severely reduced compared to infection with wild type tachyzoites (PubMed:27165797). Parasite virulence is not affected (PubMed:27165797). In vitro, the ability to differentiate to cyst stages is normal (PubMed:27165797). In BALB/c mice infected with knockout tachyzoites (type I strain RH), virulence is not affected (PubMed:28174572). At the tachyzoite stage, loss of the intravacuolar network (IVN) tubules which appear to be replaced with large multilamellar vesicles (PubMed:30850550). Partial or complete loss of phosphorylation of several parasitophorous vacuole (PV) proteins including GRA6 and GRA7 (PubMed:30850550). Reduces PV membrane association of GRA2, GRA4, GRA6 and GRA7 (PubMed:30850550).</text>
</comment>
<comment type="similarity">
    <text evidence="9">Belongs to the protein kinase superfamily. STE Ser/Thr protein kinase family. WNG subfamily.</text>
</comment>
<proteinExistence type="evidence at protein level"/>
<reference key="1">
    <citation type="submission" date="2020-03" db="EMBL/GenBank/DDBJ databases">
        <title>Genome sequence of Toxoplasma gondii RH-88 strain.</title>
        <authorList>
            <person name="Lorenzi H.A."/>
            <person name="Venepally P."/>
            <person name="Rozenberg A."/>
            <person name="Sibley D."/>
        </authorList>
    </citation>
    <scope>NUCLEOTIDE SEQUENCE [LARGE SCALE GENOMIC DNA]</scope>
    <source>
        <strain>RH-88</strain>
    </source>
</reference>
<reference evidence="9" key="2">
    <citation type="journal article" date="2016" name="MBio">
        <title>The Toxoplasma gondii Rhoptry Kinome Is Essential for Chronic Infection.</title>
        <authorList>
            <person name="Fox B.A."/>
            <person name="Rommereim L.M."/>
            <person name="Guevara R.B."/>
            <person name="Falla A."/>
            <person name="Hortua Triana M.A."/>
            <person name="Sun Y."/>
            <person name="Bzik D.J."/>
        </authorList>
    </citation>
    <scope>FUNCTION</scope>
    <scope>DISRUPTION PHENOTYPE</scope>
    <source>
        <strain evidence="3">Prugniaud</strain>
    </source>
</reference>
<reference evidence="9" key="3">
    <citation type="journal article" date="2017" name="Front. Microbiol.">
        <title>Functional Characterization of Rhoptry Kinome in the Virulent Toxoplasma gondii RH Strain.</title>
        <authorList>
            <person name="Wang J.L."/>
            <person name="Li T.T."/>
            <person name="Elsheikha H.M."/>
            <person name="Chen K."/>
            <person name="Zhu W.N."/>
            <person name="Yue D.M."/>
            <person name="Zhu X.Q."/>
            <person name="Huang S.Y."/>
        </authorList>
    </citation>
    <scope>DISRUPTION PHENOTYPE</scope>
    <source>
        <strain evidence="4">RH</strain>
    </source>
</reference>
<reference evidence="9" key="4">
    <citation type="journal article" date="2018" name="MBio">
        <title>Aspartyl Protease 5 Matures Dense Granule Proteins That Reside at the Host-Parasite Interface in Toxoplasma gondii.</title>
        <authorList>
            <person name="Coffey M.J."/>
            <person name="Dagley L.F."/>
            <person name="Seizova S."/>
            <person name="Kapp E.A."/>
            <person name="Infusini G."/>
            <person name="Roos D.S."/>
            <person name="Boddey J.A."/>
            <person name="Webb A.I."/>
            <person name="Tonkin C.J."/>
        </authorList>
    </citation>
    <scope>IDENTIFICATION BY MASS SPECTROMETRY</scope>
    <scope>PROTEOLYTIC CLEAVAGE</scope>
    <scope>MUTAGENESIS OF ARG-258</scope>
    <source>
        <strain evidence="5">Prugniaud</strain>
    </source>
</reference>
<reference evidence="9" key="5">
    <citation type="journal article" date="2019" name="Proc. Natl. Acad. Sci. U.S.A.">
        <title>Divergent kinase regulates membrane ultrastructure of the Toxoplasma parasitophorous vacuole.</title>
        <authorList>
            <person name="Beraki T."/>
            <person name="Hu X."/>
            <person name="Broncel M."/>
            <person name="Young J.C."/>
            <person name="O'Shaughnessy W.J."/>
            <person name="Borek D."/>
            <person name="Treeck M."/>
            <person name="Reese M.L."/>
        </authorList>
    </citation>
    <scope>FUNCTION</scope>
    <scope>CATALYTIC ACTIVITY</scope>
    <scope>COFACTOR</scope>
    <scope>BIOPHYSICOCHEMICAL PROPERTIES</scope>
    <scope>SUBCELLULAR LOCATION</scope>
    <scope>DEVELOPMENTAL STAGE</scope>
    <scope>DOMAIN</scope>
    <scope>DISRUPTION PHENOTYPE</scope>
    <scope>ACTIVE SITE</scope>
    <scope>MUTAGENESIS OF ARG-361; ARG-362; VAL-393; LYS-395; ARG-485; ASP-486; ASP-504 AND GLU-506</scope>
    <source>
        <strain evidence="6">RH</strain>
    </source>
</reference>
<organism>
    <name type="scientific">Toxoplasma gondii</name>
    <dbReference type="NCBI Taxonomy" id="5811"/>
    <lineage>
        <taxon>Eukaryota</taxon>
        <taxon>Sar</taxon>
        <taxon>Alveolata</taxon>
        <taxon>Apicomplexa</taxon>
        <taxon>Conoidasida</taxon>
        <taxon>Coccidia</taxon>
        <taxon>Eucoccidiorida</taxon>
        <taxon>Eimeriorina</taxon>
        <taxon>Sarcocystidae</taxon>
        <taxon>Toxoplasma</taxon>
    </lineage>
</organism>
<dbReference type="EC" id="2.7.11.1" evidence="6"/>
<dbReference type="EMBL" id="JAAUHK010000193">
    <property type="protein sequence ID" value="KAF4642601.1"/>
    <property type="molecule type" value="Genomic_DNA"/>
</dbReference>
<dbReference type="SMR" id="A0A7J6K7Y0"/>
<dbReference type="VEuPathDB" id="ToxoDB:TGME49_304740"/>
<dbReference type="Proteomes" id="UP000557509">
    <property type="component" value="Unassembled WGS sequence"/>
</dbReference>
<dbReference type="GO" id="GO:0005576">
    <property type="term" value="C:extracellular region"/>
    <property type="evidence" value="ECO:0007669"/>
    <property type="project" value="UniProtKB-SubCell"/>
</dbReference>
<dbReference type="GO" id="GO:0005524">
    <property type="term" value="F:ATP binding"/>
    <property type="evidence" value="ECO:0007669"/>
    <property type="project" value="UniProtKB-KW"/>
</dbReference>
<dbReference type="GO" id="GO:0046872">
    <property type="term" value="F:metal ion binding"/>
    <property type="evidence" value="ECO:0007669"/>
    <property type="project" value="UniProtKB-KW"/>
</dbReference>
<dbReference type="GO" id="GO:0004674">
    <property type="term" value="F:protein serine/threonine kinase activity"/>
    <property type="evidence" value="ECO:0007669"/>
    <property type="project" value="UniProtKB-KW"/>
</dbReference>
<dbReference type="GO" id="GO:0035556">
    <property type="term" value="P:intracellular signal transduction"/>
    <property type="evidence" value="ECO:0007669"/>
    <property type="project" value="TreeGrafter"/>
</dbReference>
<dbReference type="CDD" id="cd00180">
    <property type="entry name" value="PKc"/>
    <property type="match status" value="1"/>
</dbReference>
<dbReference type="Gene3D" id="1.10.510.10">
    <property type="entry name" value="Transferase(Phosphotransferase) domain 1"/>
    <property type="match status" value="1"/>
</dbReference>
<dbReference type="InterPro" id="IPR011009">
    <property type="entry name" value="Kinase-like_dom_sf"/>
</dbReference>
<dbReference type="InterPro" id="IPR000719">
    <property type="entry name" value="Prot_kinase_dom"/>
</dbReference>
<dbReference type="InterPro" id="IPR008271">
    <property type="entry name" value="Ser/Thr_kinase_AS"/>
</dbReference>
<dbReference type="InterPro" id="IPR050236">
    <property type="entry name" value="Ser_Thr_kinase_AGC"/>
</dbReference>
<dbReference type="PANTHER" id="PTHR24356">
    <property type="entry name" value="SERINE/THREONINE-PROTEIN KINASE"/>
    <property type="match status" value="1"/>
</dbReference>
<dbReference type="PANTHER" id="PTHR24356:SF1">
    <property type="entry name" value="SERINE_THREONINE-PROTEIN KINASE GREATWALL"/>
    <property type="match status" value="1"/>
</dbReference>
<dbReference type="Pfam" id="PF00069">
    <property type="entry name" value="Pkinase"/>
    <property type="match status" value="1"/>
</dbReference>
<dbReference type="SMART" id="SM00220">
    <property type="entry name" value="S_TKc"/>
    <property type="match status" value="1"/>
</dbReference>
<dbReference type="SUPFAM" id="SSF56112">
    <property type="entry name" value="Protein kinase-like (PK-like)"/>
    <property type="match status" value="1"/>
</dbReference>
<dbReference type="PROSITE" id="PS50011">
    <property type="entry name" value="PROTEIN_KINASE_DOM"/>
    <property type="match status" value="1"/>
</dbReference>
<dbReference type="PROSITE" id="PS00108">
    <property type="entry name" value="PROTEIN_KINASE_ST"/>
    <property type="match status" value="1"/>
</dbReference>
<accession>A0A7J6K7Y0</accession>
<keyword id="KW-0067">ATP-binding</keyword>
<keyword id="KW-0418">Kinase</keyword>
<keyword id="KW-0460">Magnesium</keyword>
<keyword id="KW-0479">Metal-binding</keyword>
<keyword id="KW-0547">Nucleotide-binding</keyword>
<keyword id="KW-1185">Reference proteome</keyword>
<keyword id="KW-0964">Secreted</keyword>
<keyword id="KW-0723">Serine/threonine-protein kinase</keyword>
<keyword id="KW-0732">Signal</keyword>
<keyword id="KW-0808">Transferase</keyword>
<sequence length="640" mass="71272">MPEQDLASGFLLRFQNARPVCLSVGSFVSFRTVQPRKMRDRGWRCVWHRMAGVGALFGIFGVLCTVEAGATVAAPQVETGPLLSVRAPRSPLHLRDVDAPEVTHASSEGSPQFESSLSQQRLRRPADRGEAHNGEEPRKDAATQTVRGYGGQSTEPPPASIVPVSSEAPQDGAEQRQASSAAESLAGLDPDAGDTGLRSQEMDEEGSGAAQDMERAHAAQPTVSTWDDAHLVQVSTSHPDMFPVDGSFSKKQEGRRERRLAVRGDDSFARGHNRDRDASNGRSILRRAPGWAKIAALATGLLVSAFGYSSYKHGGPRVALRIHKLHLKRKLPISWRRYLNNLPVLDERLFPEFEDILPWLRRGARLVKRVPHVSEALADFIGLDEETRRTGIVIKVKSSTDAEARRLVYEVNAHANMVPDNPFFLPIIGAYQGASKRAVYMILPRARADVADYVRARPYDVDVRLAAAEMVYSNYILHTHGFLHRDIKAHNYFVTFDGHVVLADFEGVGVLQQRTPVVGTRGYFAPELSRATDHTEKSDVFALGQTLKRLVKYMRPTVRVPHLRELWALTKRMTAKDPEERPTLKQVMEDPYFDGIDFERLEAKDQGVPFRGDFSIDDPDAGGKMYIPPSKEQDHEQENE</sequence>
<feature type="signal peptide" evidence="5">
    <location>
        <begin position="1"/>
        <end position="70"/>
    </location>
</feature>
<feature type="chain" id="PRO_0000456804" description="Serine/threonine-protein kinase WNG1">
    <location>
        <begin position="71"/>
        <end position="640"/>
    </location>
</feature>
<feature type="domain" description="Protein kinase" evidence="1">
    <location>
        <begin position="291"/>
        <end position="593"/>
    </location>
</feature>
<feature type="region of interest" description="Disordered" evidence="2">
    <location>
        <begin position="100"/>
        <end position="222"/>
    </location>
</feature>
<feature type="region of interest" description="Disordered" evidence="2">
    <location>
        <begin position="237"/>
        <end position="280"/>
    </location>
</feature>
<feature type="region of interest" description="Disordered" evidence="2">
    <location>
        <begin position="609"/>
        <end position="640"/>
    </location>
</feature>
<feature type="compositionally biased region" description="Polar residues" evidence="2">
    <location>
        <begin position="104"/>
        <end position="120"/>
    </location>
</feature>
<feature type="compositionally biased region" description="Basic and acidic residues" evidence="2">
    <location>
        <begin position="124"/>
        <end position="141"/>
    </location>
</feature>
<feature type="compositionally biased region" description="Low complexity" evidence="2">
    <location>
        <begin position="175"/>
        <end position="186"/>
    </location>
</feature>
<feature type="compositionally biased region" description="Basic and acidic residues" evidence="2">
    <location>
        <begin position="248"/>
        <end position="279"/>
    </location>
</feature>
<feature type="compositionally biased region" description="Basic and acidic residues" evidence="2">
    <location>
        <begin position="631"/>
        <end position="640"/>
    </location>
</feature>
<feature type="active site" description="Proton acceptor" evidence="10">
    <location>
        <position position="486"/>
    </location>
</feature>
<feature type="binding site" evidence="10">
    <location>
        <position position="395"/>
    </location>
    <ligand>
        <name>ATP</name>
        <dbReference type="ChEBI" id="CHEBI:30616"/>
    </ligand>
</feature>
<feature type="site" description="Cleavage; by ASP5" evidence="5">
    <location>
        <begin position="260"/>
        <end position="261"/>
    </location>
</feature>
<feature type="mutagenesis site" description="Loss of proteolytic cleavage by ASP5." evidence="5">
    <original>R</original>
    <variation>A</variation>
    <location>
        <position position="258"/>
    </location>
</feature>
<feature type="mutagenesis site" description="Severe loss of catalytic activity." evidence="6">
    <original>R</original>
    <variation>A</variation>
    <location>
        <position position="361"/>
    </location>
</feature>
<feature type="mutagenesis site" description="Partial loss of catalytic activity." evidence="6">
    <original>R</original>
    <variation>A</variation>
    <location>
        <position position="362"/>
    </location>
</feature>
<feature type="mutagenesis site" description="Severe loss of catalytic activity." evidence="6">
    <original>V</original>
    <variation>A</variation>
    <location>
        <position position="393"/>
    </location>
</feature>
<feature type="mutagenesis site" description="Loss of catalytic activity." evidence="6">
    <original>K</original>
    <variation>M</variation>
    <location>
        <position position="395"/>
    </location>
</feature>
<feature type="mutagenesis site" description="Loss of catalytic activity." evidence="6">
    <original>R</original>
    <variation>A</variation>
    <location>
        <position position="485"/>
    </location>
</feature>
<feature type="mutagenesis site" description="Loss of catalytic activity. At the tachyzoite stage, loss of the intravacuolar network (IVN) tubules which appear to be replaced with large multilamellar vesicles. Partial or complete loss of phosphorylation of several parasitophorous vacuole (PV) proteins including GRA6 and GRA7. Reduces PV membrane association of GRA2, GRA4, GRA6 and GRA7." evidence="6">
    <original>D</original>
    <variation>S</variation>
    <location>
        <position position="486"/>
    </location>
</feature>
<feature type="mutagenesis site" description="Loss of catalytic activity." evidence="6">
    <original>D</original>
    <variation>A</variation>
    <location>
        <position position="504"/>
    </location>
</feature>
<feature type="mutagenesis site" description="Loss of catalytic activity." evidence="6">
    <original>E</original>
    <variation>A</variation>
    <variation>G</variation>
    <location>
        <position position="506"/>
    </location>
</feature>
<protein>
    <recommendedName>
        <fullName evidence="9">Serine/threonine-protein kinase WNG1</fullName>
        <ecNumber evidence="6">2.7.11.1</ecNumber>
    </recommendedName>
    <alternativeName>
        <fullName evidence="7">Rhoptry kinase family protein ROP35</fullName>
    </alternativeName>
    <alternativeName>
        <fullName evidence="8">With-No-Gly-loop kinase 1</fullName>
    </alternativeName>
</protein>
<evidence type="ECO:0000255" key="1">
    <source>
        <dbReference type="PROSITE-ProRule" id="PRU00159"/>
    </source>
</evidence>
<evidence type="ECO:0000256" key="2">
    <source>
        <dbReference type="SAM" id="MobiDB-lite"/>
    </source>
</evidence>
<evidence type="ECO:0000269" key="3">
    <source>
    </source>
</evidence>
<evidence type="ECO:0000269" key="4">
    <source>
    </source>
</evidence>
<evidence type="ECO:0000269" key="5">
    <source>
    </source>
</evidence>
<evidence type="ECO:0000269" key="6">
    <source>
    </source>
</evidence>
<evidence type="ECO:0000303" key="7">
    <source>
    </source>
</evidence>
<evidence type="ECO:0000303" key="8">
    <source>
    </source>
</evidence>
<evidence type="ECO:0000305" key="9"/>
<evidence type="ECO:0000305" key="10">
    <source>
    </source>
</evidence>
<evidence type="ECO:0000312" key="11">
    <source>
        <dbReference type="EMBL" id="KAF4642601.1"/>
    </source>
</evidence>